<keyword id="KW-0426">Late protein</keyword>
<keyword id="KW-0946">Virion</keyword>
<feature type="chain" id="PRO_0000373647" description="Uncharacterized protein F317L">
    <location>
        <begin position="1"/>
        <end position="317"/>
    </location>
</feature>
<reference key="1">
    <citation type="submission" date="2003-03" db="EMBL/GenBank/DDBJ databases">
        <title>African swine fever virus genomes.</title>
        <authorList>
            <person name="Kutish G.F."/>
            <person name="Rock D.L."/>
        </authorList>
    </citation>
    <scope>NUCLEOTIDE SEQUENCE [LARGE SCALE GENOMIC DNA]</scope>
</reference>
<evidence type="ECO:0000250" key="1">
    <source>
        <dbReference type="UniProtKB" id="Q65144"/>
    </source>
</evidence>
<evidence type="ECO:0000305" key="2"/>
<comment type="subcellular location">
    <subcellularLocation>
        <location evidence="1">Virion</location>
    </subcellularLocation>
</comment>
<comment type="induction">
    <text evidence="2">Expressed in the late phase of the viral replicative cycle.</text>
</comment>
<comment type="similarity">
    <text evidence="2">Belongs to the asfivirus F317L family.</text>
</comment>
<organism>
    <name type="scientific">African swine fever virus (isolate Tick/South Africa/Pretoriuskop Pr4/1996)</name>
    <name type="common">ASFV</name>
    <dbReference type="NCBI Taxonomy" id="561443"/>
    <lineage>
        <taxon>Viruses</taxon>
        <taxon>Varidnaviria</taxon>
        <taxon>Bamfordvirae</taxon>
        <taxon>Nucleocytoviricota</taxon>
        <taxon>Pokkesviricetes</taxon>
        <taxon>Asfuvirales</taxon>
        <taxon>Asfarviridae</taxon>
        <taxon>Asfivirus</taxon>
        <taxon>African swine fever virus</taxon>
    </lineage>
</organism>
<name>VF317_ASFP4</name>
<dbReference type="EMBL" id="AY261363">
    <property type="status" value="NOT_ANNOTATED_CDS"/>
    <property type="molecule type" value="Genomic_DNA"/>
</dbReference>
<dbReference type="SMR" id="P0CAE1"/>
<dbReference type="Proteomes" id="UP000000859">
    <property type="component" value="Segment"/>
</dbReference>
<dbReference type="GO" id="GO:0044423">
    <property type="term" value="C:virion component"/>
    <property type="evidence" value="ECO:0007669"/>
    <property type="project" value="UniProtKB-KW"/>
</dbReference>
<gene>
    <name type="ordered locus">Pret-055</name>
</gene>
<protein>
    <recommendedName>
        <fullName>Uncharacterized protein F317L</fullName>
        <shortName>pF317L</shortName>
    </recommendedName>
</protein>
<proteinExistence type="inferred from homology"/>
<accession>P0CAE1</accession>
<sequence length="317" mass="36540">MVETQMDKLGFLLNHIGKQVTTKVLSNAHITQTMKEIILENHSVDGGAAKNASKGKSSPKEKKHWTEFESWEQLSKSKRSFKEYWTERNEIVNTLLLNWDNVRAAIKKFLNDDREWCGRINMVNGVPEIVEIIPSPYRAGENIYFGSEAMMPAEIYSRVANKPAMFVFHTHPNLGSCCGGMPSICDISTTLRYLLMGWTAGHLIISSNQVGMLTVDKRIIVDLWANENPRWLMAQKILDIFMMLTSRRSLVNPWTLRDLKKILQDYGIEYIIFPSNDFFIYEDARLLMFSKKWTNFFTLHELLNDLETIETKATSST</sequence>
<organismHost>
    <name type="scientific">Ornithodoros</name>
    <name type="common">relapsing fever ticks</name>
    <dbReference type="NCBI Taxonomy" id="6937"/>
</organismHost>
<organismHost>
    <name type="scientific">Phacochoerus aethiopicus</name>
    <name type="common">Warthog</name>
    <dbReference type="NCBI Taxonomy" id="85517"/>
</organismHost>
<organismHost>
    <name type="scientific">Phacochoerus africanus</name>
    <name type="common">Warthog</name>
    <dbReference type="NCBI Taxonomy" id="41426"/>
</organismHost>
<organismHost>
    <name type="scientific">Potamochoerus larvatus</name>
    <name type="common">Bushpig</name>
    <dbReference type="NCBI Taxonomy" id="273792"/>
</organismHost>
<organismHost>
    <name type="scientific">Sus scrofa</name>
    <name type="common">Pig</name>
    <dbReference type="NCBI Taxonomy" id="9823"/>
</organismHost>